<proteinExistence type="predicted"/>
<accession>P70795</accession>
<sequence length="502" mass="52775">MMDLISNLSLGFETALTPVNIVWCFVGVLLGTLVGVLPGIGPTATIAMLLPITFTFSPVTSLIMLSGIYYGAQYGGSTTAILINLPGESSSAVTAIDGYQMARKGRAGQALATAALGSFFAGCVATLLLAIAAPPLASVALKFGAPEYFALIVLGLLVSISLAHGSVLKALGMIVVGLLLGTVGQDIYTGQERFTFGQMELTEGINFVSIAVGVFGVAEIFRNLQDESDREVGVKRVMNLWLSKEDFRRITGPVIRGTILGSILGVLPGGGHVLASFASYSAEKNLSKHPEEFGHGAIEGVAGPESANNAAAQTSFIPLLTLGIPAHPVMALIVGAFILQGITPGPDVINSQPALFWGIIASMWIGNLLLVILNLPLIGLWVKMLTIPYRMLFPAIVVFAAIGCYSINSNPFDVYAIIVAGILGFLLIRMGCEPAPLLLGFVLGPLLEEHLRRAMIISRGDAMVFVTNPIAASLLAVGLACVVIALLPSIRSKRDKVFVEED</sequence>
<dbReference type="EMBL" id="U32375">
    <property type="protein sequence ID" value="AAB61631.1"/>
    <property type="molecule type" value="Genomic_DNA"/>
</dbReference>
<dbReference type="InterPro" id="IPR002823">
    <property type="entry name" value="DUF112_TM"/>
</dbReference>
<dbReference type="PANTHER" id="PTHR35342">
    <property type="entry name" value="TRICARBOXYLIC TRANSPORT PROTEIN"/>
    <property type="match status" value="1"/>
</dbReference>
<dbReference type="PANTHER" id="PTHR35342:SF5">
    <property type="entry name" value="TRICARBOXYLIC TRANSPORT PROTEIN"/>
    <property type="match status" value="1"/>
</dbReference>
<dbReference type="Pfam" id="PF01970">
    <property type="entry name" value="TctA"/>
    <property type="match status" value="1"/>
</dbReference>
<feature type="chain" id="PRO_0000066554" description="Uncharacterized 52.8 kDa protein in TAR-I ttuC' 3'region">
    <location>
        <begin position="1"/>
        <end position="502"/>
    </location>
</feature>
<name>YZ2R_AGRVI</name>
<keyword id="KW-0614">Plasmid</keyword>
<organism>
    <name type="scientific">Agrobacterium vitis</name>
    <name type="common">Rhizobium vitis</name>
    <dbReference type="NCBI Taxonomy" id="373"/>
    <lineage>
        <taxon>Bacteria</taxon>
        <taxon>Pseudomonadati</taxon>
        <taxon>Pseudomonadota</taxon>
        <taxon>Alphaproteobacteria</taxon>
        <taxon>Hyphomicrobiales</taxon>
        <taxon>Rhizobiaceae</taxon>
        <taxon>Rhizobium/Agrobacterium group</taxon>
        <taxon>Agrobacterium</taxon>
    </lineage>
</organism>
<reference key="1">
    <citation type="journal article" date="1996" name="Mol. Plant Microbe Interact.">
        <title>Characterization and distribution of tartrate utilization genes in the grapevine pathogen Agrobacterium vitis.</title>
        <authorList>
            <person name="Salomone J.-Y."/>
            <person name="Crouzet P."/>
            <person name="de Ruffray P."/>
            <person name="Otten L."/>
        </authorList>
    </citation>
    <scope>NUCLEOTIDE SEQUENCE [GENOMIC DNA]</scope>
    <source>
        <strain>AB3</strain>
    </source>
</reference>
<geneLocation type="plasmid">
    <name>pTrAB3</name>
</geneLocation>
<protein>
    <recommendedName>
        <fullName>Uncharacterized 52.8 kDa protein in TAR-I ttuC' 3'region</fullName>
    </recommendedName>
    <alternativeName>
        <fullName>ORFZ2</fullName>
    </alternativeName>
</protein>